<name>NIFH1_NOSS1</name>
<protein>
    <recommendedName>
        <fullName>Nitrogenase iron protein 1</fullName>
        <ecNumber>1.18.6.1</ecNumber>
    </recommendedName>
    <alternativeName>
        <fullName>Nitrogenase Fe protein 1</fullName>
    </alternativeName>
    <alternativeName>
        <fullName>Nitrogenase component II</fullName>
    </alternativeName>
    <alternativeName>
        <fullName>Nitrogenase reductase</fullName>
    </alternativeName>
</protein>
<comment type="function">
    <text evidence="1">The key enzymatic reactions in nitrogen fixation are catalyzed by the nitrogenase complex, which has 2 components: the iron protein and the molybdenum-iron protein.</text>
</comment>
<comment type="catalytic activity">
    <reaction>
        <text>N2 + 8 reduced [2Fe-2S]-[ferredoxin] + 16 ATP + 16 H2O = H2 + 8 oxidized [2Fe-2S]-[ferredoxin] + 2 NH4(+) + 16 ADP + 16 phosphate + 6 H(+)</text>
        <dbReference type="Rhea" id="RHEA:21448"/>
        <dbReference type="Rhea" id="RHEA-COMP:10000"/>
        <dbReference type="Rhea" id="RHEA-COMP:10001"/>
        <dbReference type="ChEBI" id="CHEBI:15377"/>
        <dbReference type="ChEBI" id="CHEBI:15378"/>
        <dbReference type="ChEBI" id="CHEBI:17997"/>
        <dbReference type="ChEBI" id="CHEBI:18276"/>
        <dbReference type="ChEBI" id="CHEBI:28938"/>
        <dbReference type="ChEBI" id="CHEBI:30616"/>
        <dbReference type="ChEBI" id="CHEBI:33737"/>
        <dbReference type="ChEBI" id="CHEBI:33738"/>
        <dbReference type="ChEBI" id="CHEBI:43474"/>
        <dbReference type="ChEBI" id="CHEBI:456216"/>
        <dbReference type="EC" id="1.18.6.1"/>
    </reaction>
</comment>
<comment type="cofactor">
    <cofactor evidence="1">
        <name>[4Fe-4S] cluster</name>
        <dbReference type="ChEBI" id="CHEBI:49883"/>
    </cofactor>
    <text evidence="1">Binds 1 [4Fe-4S] cluster per dimer.</text>
</comment>
<comment type="subunit">
    <text evidence="1">Homodimer.</text>
</comment>
<comment type="PTM">
    <text evidence="1">The reversible ADP-ribosylation of Arg-104 inactivates the nitrogenase reductase and regulates nitrogenase activity.</text>
</comment>
<comment type="similarity">
    <text evidence="3">Belongs to the NifH/BchL/ChlL family.</text>
</comment>
<reference key="1">
    <citation type="journal article" date="1980" name="Proc. Natl. Acad. Sci. U.S.A.">
        <title>Nucleotide sequence of a cyanobacterial nifH gene coding for nitrogenase reductase.</title>
        <authorList>
            <person name="Mevarech M."/>
            <person name="Rice D."/>
            <person name="Haselkorn R."/>
        </authorList>
    </citation>
    <scope>NUCLEOTIDE SEQUENCE [GENOMIC DNA]</scope>
</reference>
<reference key="2">
    <citation type="journal article" date="2001" name="DNA Res.">
        <title>Complete genomic sequence of the filamentous nitrogen-fixing cyanobacterium Anabaena sp. strain PCC 7120.</title>
        <authorList>
            <person name="Kaneko T."/>
            <person name="Nakamura Y."/>
            <person name="Wolk C.P."/>
            <person name="Kuritz T."/>
            <person name="Sasamoto S."/>
            <person name="Watanabe A."/>
            <person name="Iriguchi M."/>
            <person name="Ishikawa A."/>
            <person name="Kawashima K."/>
            <person name="Kimura T."/>
            <person name="Kishida Y."/>
            <person name="Kohara M."/>
            <person name="Matsumoto M."/>
            <person name="Matsuno A."/>
            <person name="Muraki A."/>
            <person name="Nakazaki N."/>
            <person name="Shimpo S."/>
            <person name="Sugimoto M."/>
            <person name="Takazawa M."/>
            <person name="Yamada M."/>
            <person name="Yasuda M."/>
            <person name="Tabata S."/>
        </authorList>
    </citation>
    <scope>NUCLEOTIDE SEQUENCE [LARGE SCALE GENOMIC DNA]</scope>
    <source>
        <strain>PCC 7120 / SAG 25.82 / UTEX 2576</strain>
    </source>
</reference>
<accession>P00457</accession>
<proteinExistence type="inferred from homology"/>
<keyword id="KW-0004">4Fe-4S</keyword>
<keyword id="KW-0013">ADP-ribosylation</keyword>
<keyword id="KW-0067">ATP-binding</keyword>
<keyword id="KW-0408">Iron</keyword>
<keyword id="KW-0411">Iron-sulfur</keyword>
<keyword id="KW-0479">Metal-binding</keyword>
<keyword id="KW-0535">Nitrogen fixation</keyword>
<keyword id="KW-0547">Nucleotide-binding</keyword>
<keyword id="KW-0560">Oxidoreductase</keyword>
<keyword id="KW-1185">Reference proteome</keyword>
<evidence type="ECO:0000250" key="1"/>
<evidence type="ECO:0000255" key="2"/>
<evidence type="ECO:0000305" key="3"/>
<gene>
    <name type="primary">nifH1</name>
    <name type="synonym">nifH</name>
    <name type="ordered locus">all1455</name>
</gene>
<sequence length="295" mass="32310">MTDENIRQIAFYGKGGIGKSTTSQNTLAAMAEMGQRIMIVGCDPKADSTRLMLHSKAQTTVLHLAAERGAVEDLELHEVMLTGFRGVKCVESGGPEPGVGCAGRGIITAINFLEENGAYQDLDFVSYDVLGDVVCGGFAMPIREGKAQEIYIVTSGEMMAMYAANNIARGILKYAHSGGVRLGGLICNSRKVDREDELIMNLAERLNTQMIHFVPRDNIVQHAELRRMTVNEYAPDSNQGQEYRALAKKIINNDKLTIPTPMEMDELEALLIEYGLLDDDTKHSEIIGKPAEATK</sequence>
<organism>
    <name type="scientific">Nostoc sp. (strain PCC 7120 / SAG 25.82 / UTEX 2576)</name>
    <dbReference type="NCBI Taxonomy" id="103690"/>
    <lineage>
        <taxon>Bacteria</taxon>
        <taxon>Bacillati</taxon>
        <taxon>Cyanobacteriota</taxon>
        <taxon>Cyanophyceae</taxon>
        <taxon>Nostocales</taxon>
        <taxon>Nostocaceae</taxon>
        <taxon>Nostoc</taxon>
    </lineage>
</organism>
<feature type="chain" id="PRO_0000139481" description="Nitrogenase iron protein 1">
    <location>
        <begin position="1"/>
        <end position="295"/>
    </location>
</feature>
<feature type="binding site" evidence="2">
    <location>
        <begin position="13"/>
        <end position="20"/>
    </location>
    <ligand>
        <name>ATP</name>
        <dbReference type="ChEBI" id="CHEBI:30616"/>
    </ligand>
</feature>
<feature type="binding site" evidence="1">
    <location>
        <position position="101"/>
    </location>
    <ligand>
        <name>[4Fe-4S] cluster</name>
        <dbReference type="ChEBI" id="CHEBI:49883"/>
        <note>ligand shared between dimeric partners</note>
    </ligand>
</feature>
<feature type="binding site" evidence="1">
    <location>
        <position position="135"/>
    </location>
    <ligand>
        <name>[4Fe-4S] cluster</name>
        <dbReference type="ChEBI" id="CHEBI:49883"/>
        <note>ligand shared between dimeric partners</note>
    </ligand>
</feature>
<feature type="modified residue" description="ADP-ribosylarginine; by dinitrogenase reductase ADP-ribosyltransferase" evidence="1">
    <location>
        <position position="104"/>
    </location>
</feature>
<feature type="sequence conflict" description="In Ref. 1; CAA24729/CAA23398." evidence="3" ref="1">
    <location>
        <position position="251"/>
    </location>
</feature>
<feature type="sequence conflict" description="In Ref. 1; CAA24729/CAA23398/AAA22008." evidence="3" ref="1">
    <original>L</original>
    <variation>K</variation>
    <location>
        <position position="271"/>
    </location>
</feature>
<feature type="sequence conflict" description="In Ref. 1; CAA24729/CAA23398." evidence="3" ref="1">
    <original>K</original>
    <variation>NRSCRN</variation>
    <location>
        <position position="295"/>
    </location>
</feature>
<dbReference type="EC" id="1.18.6.1"/>
<dbReference type="EMBL" id="V01482">
    <property type="protein sequence ID" value="CAA24729.1"/>
    <property type="molecule type" value="Genomic_DNA"/>
</dbReference>
<dbReference type="EMBL" id="V00001">
    <property type="protein sequence ID" value="CAA23398.1"/>
    <property type="molecule type" value="Genomic_DNA"/>
</dbReference>
<dbReference type="EMBL" id="J05111">
    <property type="protein sequence ID" value="AAA22008.1"/>
    <property type="molecule type" value="Genomic_DNA"/>
</dbReference>
<dbReference type="EMBL" id="BA000019">
    <property type="protein sequence ID" value="BAB73411.1"/>
    <property type="molecule type" value="Genomic_DNA"/>
</dbReference>
<dbReference type="PIR" id="A00534">
    <property type="entry name" value="NIAIF"/>
</dbReference>
<dbReference type="PIR" id="AC1988">
    <property type="entry name" value="AC1988"/>
</dbReference>
<dbReference type="RefSeq" id="WP_010995626.1">
    <property type="nucleotide sequence ID" value="NZ_RSCN01000040.1"/>
</dbReference>
<dbReference type="SMR" id="P00457"/>
<dbReference type="STRING" id="103690.gene:10493469"/>
<dbReference type="KEGG" id="ana:all1455"/>
<dbReference type="eggNOG" id="COG1348">
    <property type="taxonomic scope" value="Bacteria"/>
</dbReference>
<dbReference type="OrthoDB" id="9778641at2"/>
<dbReference type="Proteomes" id="UP000002483">
    <property type="component" value="Chromosome"/>
</dbReference>
<dbReference type="GO" id="GO:0051539">
    <property type="term" value="F:4 iron, 4 sulfur cluster binding"/>
    <property type="evidence" value="ECO:0007669"/>
    <property type="project" value="UniProtKB-KW"/>
</dbReference>
<dbReference type="GO" id="GO:0005524">
    <property type="term" value="F:ATP binding"/>
    <property type="evidence" value="ECO:0007669"/>
    <property type="project" value="UniProtKB-UniRule"/>
</dbReference>
<dbReference type="GO" id="GO:0046872">
    <property type="term" value="F:metal ion binding"/>
    <property type="evidence" value="ECO:0007669"/>
    <property type="project" value="UniProtKB-KW"/>
</dbReference>
<dbReference type="GO" id="GO:0016163">
    <property type="term" value="F:nitrogenase activity"/>
    <property type="evidence" value="ECO:0007669"/>
    <property type="project" value="UniProtKB-UniRule"/>
</dbReference>
<dbReference type="GO" id="GO:0009399">
    <property type="term" value="P:nitrogen fixation"/>
    <property type="evidence" value="ECO:0007669"/>
    <property type="project" value="UniProtKB-UniRule"/>
</dbReference>
<dbReference type="CDD" id="cd02040">
    <property type="entry name" value="NifH"/>
    <property type="match status" value="1"/>
</dbReference>
<dbReference type="FunFam" id="3.40.50.300:FF:001379">
    <property type="entry name" value="Nitrogenase iron protein 1"/>
    <property type="match status" value="1"/>
</dbReference>
<dbReference type="Gene3D" id="3.40.50.300">
    <property type="entry name" value="P-loop containing nucleotide triphosphate hydrolases"/>
    <property type="match status" value="1"/>
</dbReference>
<dbReference type="HAMAP" id="MF_00533">
    <property type="entry name" value="NifH"/>
    <property type="match status" value="1"/>
</dbReference>
<dbReference type="InterPro" id="IPR030655">
    <property type="entry name" value="NifH/chlL_CS"/>
</dbReference>
<dbReference type="InterPro" id="IPR000392">
    <property type="entry name" value="NifH/frxC"/>
</dbReference>
<dbReference type="InterPro" id="IPR005977">
    <property type="entry name" value="Nitrogenase_Fe_NifH"/>
</dbReference>
<dbReference type="InterPro" id="IPR027417">
    <property type="entry name" value="P-loop_NTPase"/>
</dbReference>
<dbReference type="NCBIfam" id="TIGR01287">
    <property type="entry name" value="nifH"/>
    <property type="match status" value="1"/>
</dbReference>
<dbReference type="PANTHER" id="PTHR42864">
    <property type="entry name" value="LIGHT-INDEPENDENT PROTOCHLOROPHYLLIDE REDUCTASE IRON-SULFUR ATP-BINDING PROTEIN"/>
    <property type="match status" value="1"/>
</dbReference>
<dbReference type="PANTHER" id="PTHR42864:SF2">
    <property type="entry name" value="LIGHT-INDEPENDENT PROTOCHLOROPHYLLIDE REDUCTASE IRON-SULFUR ATP-BINDING PROTEIN"/>
    <property type="match status" value="1"/>
</dbReference>
<dbReference type="Pfam" id="PF00142">
    <property type="entry name" value="Fer4_NifH"/>
    <property type="match status" value="1"/>
</dbReference>
<dbReference type="PIRSF" id="PIRSF000363">
    <property type="entry name" value="Nitrogenase_iron"/>
    <property type="match status" value="1"/>
</dbReference>
<dbReference type="PRINTS" id="PR00091">
    <property type="entry name" value="NITROGNASEII"/>
</dbReference>
<dbReference type="SUPFAM" id="SSF52540">
    <property type="entry name" value="P-loop containing nucleoside triphosphate hydrolases"/>
    <property type="match status" value="1"/>
</dbReference>
<dbReference type="PROSITE" id="PS00746">
    <property type="entry name" value="NIFH_FRXC_1"/>
    <property type="match status" value="1"/>
</dbReference>
<dbReference type="PROSITE" id="PS00692">
    <property type="entry name" value="NIFH_FRXC_2"/>
    <property type="match status" value="1"/>
</dbReference>
<dbReference type="PROSITE" id="PS51026">
    <property type="entry name" value="NIFH_FRXC_3"/>
    <property type="match status" value="1"/>
</dbReference>